<proteinExistence type="inferred from homology"/>
<protein>
    <recommendedName>
        <fullName evidence="1">Serine hydroxymethyltransferase</fullName>
        <shortName evidence="1">SHMT</shortName>
        <shortName evidence="1">Serine methylase</shortName>
        <ecNumber evidence="1">2.1.2.1</ecNumber>
    </recommendedName>
</protein>
<sequence length="439" mass="47231">MSQANAAAKNASSDVFFNASLEDIDSEIFGAIRNELGRQRHEIELIASENIVSRAVLEAQGSILTNKYAEGYPGKRYYGGCQYVDVVEELAIERAKKLFGCEFANVQPNSGSQMNQAVFLALLQPGDTFMGLDLNSGGHLTHGSPVNMSGKWFNVVSYGVRKDDHLLDMDEVARLARENKPKLILAGGTAYSRVWDWKRFREIADEVGAYLMVDMAHIAGLVAGGVHPSPVPHAHVCTTTTHKSLRGPRGGMILTNDADIAKKINSAVFPGLQGGPLMHVIAGKAVAFAEALKPEFKLYAKNVVDNARALAEELKSNGLDIVSGGTDNHLMLVDLRPKNATGKRAEAALGRANITCNKNGIPFDPEKPFVTSGVRLGTPAGTTRGFGVTEFKEIGSLIAEVLDGLKVANSDEGNAAVEQAVKEKVMALTDRFPMYGYQG</sequence>
<dbReference type="EC" id="2.1.2.1" evidence="1"/>
<dbReference type="EMBL" id="CP000758">
    <property type="protein sequence ID" value="ABS15243.1"/>
    <property type="molecule type" value="Genomic_DNA"/>
</dbReference>
<dbReference type="RefSeq" id="WP_012092341.1">
    <property type="nucleotide sequence ID" value="NC_009667.1"/>
</dbReference>
<dbReference type="SMR" id="A6X1Y9"/>
<dbReference type="STRING" id="439375.Oant_2530"/>
<dbReference type="KEGG" id="oan:Oant_2530"/>
<dbReference type="PATRIC" id="fig|439375.7.peg.2664"/>
<dbReference type="eggNOG" id="COG0112">
    <property type="taxonomic scope" value="Bacteria"/>
</dbReference>
<dbReference type="HOGENOM" id="CLU_022477_2_1_5"/>
<dbReference type="PhylomeDB" id="A6X1Y9"/>
<dbReference type="UniPathway" id="UPA00193"/>
<dbReference type="UniPathway" id="UPA00288">
    <property type="reaction ID" value="UER01023"/>
</dbReference>
<dbReference type="Proteomes" id="UP000002301">
    <property type="component" value="Chromosome 1"/>
</dbReference>
<dbReference type="GO" id="GO:0005829">
    <property type="term" value="C:cytosol"/>
    <property type="evidence" value="ECO:0007669"/>
    <property type="project" value="TreeGrafter"/>
</dbReference>
<dbReference type="GO" id="GO:0004372">
    <property type="term" value="F:glycine hydroxymethyltransferase activity"/>
    <property type="evidence" value="ECO:0007669"/>
    <property type="project" value="UniProtKB-UniRule"/>
</dbReference>
<dbReference type="GO" id="GO:0030170">
    <property type="term" value="F:pyridoxal phosphate binding"/>
    <property type="evidence" value="ECO:0007669"/>
    <property type="project" value="UniProtKB-UniRule"/>
</dbReference>
<dbReference type="GO" id="GO:0019264">
    <property type="term" value="P:glycine biosynthetic process from serine"/>
    <property type="evidence" value="ECO:0007669"/>
    <property type="project" value="UniProtKB-UniRule"/>
</dbReference>
<dbReference type="GO" id="GO:0035999">
    <property type="term" value="P:tetrahydrofolate interconversion"/>
    <property type="evidence" value="ECO:0007669"/>
    <property type="project" value="UniProtKB-UniRule"/>
</dbReference>
<dbReference type="CDD" id="cd00378">
    <property type="entry name" value="SHMT"/>
    <property type="match status" value="1"/>
</dbReference>
<dbReference type="FunFam" id="3.40.640.10:FF:000001">
    <property type="entry name" value="Serine hydroxymethyltransferase"/>
    <property type="match status" value="1"/>
</dbReference>
<dbReference type="FunFam" id="3.90.1150.10:FF:000003">
    <property type="entry name" value="Serine hydroxymethyltransferase"/>
    <property type="match status" value="1"/>
</dbReference>
<dbReference type="Gene3D" id="3.90.1150.10">
    <property type="entry name" value="Aspartate Aminotransferase, domain 1"/>
    <property type="match status" value="1"/>
</dbReference>
<dbReference type="Gene3D" id="3.40.640.10">
    <property type="entry name" value="Type I PLP-dependent aspartate aminotransferase-like (Major domain)"/>
    <property type="match status" value="1"/>
</dbReference>
<dbReference type="HAMAP" id="MF_00051">
    <property type="entry name" value="SHMT"/>
    <property type="match status" value="1"/>
</dbReference>
<dbReference type="InterPro" id="IPR015424">
    <property type="entry name" value="PyrdxlP-dep_Trfase"/>
</dbReference>
<dbReference type="InterPro" id="IPR015421">
    <property type="entry name" value="PyrdxlP-dep_Trfase_major"/>
</dbReference>
<dbReference type="InterPro" id="IPR015422">
    <property type="entry name" value="PyrdxlP-dep_Trfase_small"/>
</dbReference>
<dbReference type="InterPro" id="IPR001085">
    <property type="entry name" value="Ser_HO-MeTrfase"/>
</dbReference>
<dbReference type="InterPro" id="IPR049943">
    <property type="entry name" value="Ser_HO-MeTrfase-like"/>
</dbReference>
<dbReference type="InterPro" id="IPR019798">
    <property type="entry name" value="Ser_HO-MeTrfase_PLP_BS"/>
</dbReference>
<dbReference type="InterPro" id="IPR039429">
    <property type="entry name" value="SHMT-like_dom"/>
</dbReference>
<dbReference type="NCBIfam" id="NF000586">
    <property type="entry name" value="PRK00011.1"/>
    <property type="match status" value="1"/>
</dbReference>
<dbReference type="PANTHER" id="PTHR11680">
    <property type="entry name" value="SERINE HYDROXYMETHYLTRANSFERASE"/>
    <property type="match status" value="1"/>
</dbReference>
<dbReference type="PANTHER" id="PTHR11680:SF35">
    <property type="entry name" value="SERINE HYDROXYMETHYLTRANSFERASE 1"/>
    <property type="match status" value="1"/>
</dbReference>
<dbReference type="Pfam" id="PF00464">
    <property type="entry name" value="SHMT"/>
    <property type="match status" value="1"/>
</dbReference>
<dbReference type="PIRSF" id="PIRSF000412">
    <property type="entry name" value="SHMT"/>
    <property type="match status" value="1"/>
</dbReference>
<dbReference type="SUPFAM" id="SSF53383">
    <property type="entry name" value="PLP-dependent transferases"/>
    <property type="match status" value="1"/>
</dbReference>
<dbReference type="PROSITE" id="PS00096">
    <property type="entry name" value="SHMT"/>
    <property type="match status" value="1"/>
</dbReference>
<keyword id="KW-0028">Amino-acid biosynthesis</keyword>
<keyword id="KW-0963">Cytoplasm</keyword>
<keyword id="KW-0554">One-carbon metabolism</keyword>
<keyword id="KW-0663">Pyridoxal phosphate</keyword>
<keyword id="KW-1185">Reference proteome</keyword>
<keyword id="KW-0808">Transferase</keyword>
<gene>
    <name evidence="1" type="primary">glyA</name>
    <name type="ordered locus">Oant_2530</name>
</gene>
<feature type="chain" id="PRO_1000006286" description="Serine hydroxymethyltransferase">
    <location>
        <begin position="1"/>
        <end position="439"/>
    </location>
</feature>
<feature type="binding site" evidence="1">
    <location>
        <position position="134"/>
    </location>
    <ligand>
        <name>(6S)-5,6,7,8-tetrahydrofolate</name>
        <dbReference type="ChEBI" id="CHEBI:57453"/>
    </ligand>
</feature>
<feature type="binding site" evidence="1">
    <location>
        <begin position="138"/>
        <end position="140"/>
    </location>
    <ligand>
        <name>(6S)-5,6,7,8-tetrahydrofolate</name>
        <dbReference type="ChEBI" id="CHEBI:57453"/>
    </ligand>
</feature>
<feature type="site" description="Plays an important role in substrate specificity" evidence="1">
    <location>
        <position position="242"/>
    </location>
</feature>
<feature type="modified residue" description="N6-(pyridoxal phosphate)lysine" evidence="1">
    <location>
        <position position="243"/>
    </location>
</feature>
<organism>
    <name type="scientific">Brucella anthropi (strain ATCC 49188 / DSM 6882 / CCUG 24695 / JCM 21032 / LMG 3331 / NBRC 15819 / NCTC 12168 / Alc 37)</name>
    <name type="common">Ochrobactrum anthropi</name>
    <dbReference type="NCBI Taxonomy" id="439375"/>
    <lineage>
        <taxon>Bacteria</taxon>
        <taxon>Pseudomonadati</taxon>
        <taxon>Pseudomonadota</taxon>
        <taxon>Alphaproteobacteria</taxon>
        <taxon>Hyphomicrobiales</taxon>
        <taxon>Brucellaceae</taxon>
        <taxon>Brucella/Ochrobactrum group</taxon>
        <taxon>Brucella</taxon>
    </lineage>
</organism>
<name>GLYA_BRUA4</name>
<comment type="function">
    <text evidence="1">Catalyzes the reversible interconversion of serine and glycine with tetrahydrofolate (THF) serving as the one-carbon carrier. This reaction serves as the major source of one-carbon groups required for the biosynthesis of purines, thymidylate, methionine, and other important biomolecules. Also exhibits THF-independent aldolase activity toward beta-hydroxyamino acids, producing glycine and aldehydes, via a retro-aldol mechanism.</text>
</comment>
<comment type="catalytic activity">
    <reaction evidence="1">
        <text>(6R)-5,10-methylene-5,6,7,8-tetrahydrofolate + glycine + H2O = (6S)-5,6,7,8-tetrahydrofolate + L-serine</text>
        <dbReference type="Rhea" id="RHEA:15481"/>
        <dbReference type="ChEBI" id="CHEBI:15377"/>
        <dbReference type="ChEBI" id="CHEBI:15636"/>
        <dbReference type="ChEBI" id="CHEBI:33384"/>
        <dbReference type="ChEBI" id="CHEBI:57305"/>
        <dbReference type="ChEBI" id="CHEBI:57453"/>
        <dbReference type="EC" id="2.1.2.1"/>
    </reaction>
</comment>
<comment type="cofactor">
    <cofactor evidence="1">
        <name>pyridoxal 5'-phosphate</name>
        <dbReference type="ChEBI" id="CHEBI:597326"/>
    </cofactor>
</comment>
<comment type="pathway">
    <text evidence="1">One-carbon metabolism; tetrahydrofolate interconversion.</text>
</comment>
<comment type="pathway">
    <text evidence="1">Amino-acid biosynthesis; glycine biosynthesis; glycine from L-serine: step 1/1.</text>
</comment>
<comment type="subunit">
    <text evidence="1">Homodimer.</text>
</comment>
<comment type="subcellular location">
    <subcellularLocation>
        <location evidence="1">Cytoplasm</location>
    </subcellularLocation>
</comment>
<comment type="similarity">
    <text evidence="1">Belongs to the SHMT family.</text>
</comment>
<accession>A6X1Y9</accession>
<reference key="1">
    <citation type="journal article" date="2011" name="J. Bacteriol.">
        <title>Genome of Ochrobactrum anthropi ATCC 49188 T, a versatile opportunistic pathogen and symbiont of several eukaryotic hosts.</title>
        <authorList>
            <person name="Chain P.S."/>
            <person name="Lang D.M."/>
            <person name="Comerci D.J."/>
            <person name="Malfatti S.A."/>
            <person name="Vergez L.M."/>
            <person name="Shin M."/>
            <person name="Ugalde R.A."/>
            <person name="Garcia E."/>
            <person name="Tolmasky M.E."/>
        </authorList>
    </citation>
    <scope>NUCLEOTIDE SEQUENCE [LARGE SCALE GENOMIC DNA]</scope>
    <source>
        <strain>ATCC 49188 / DSM 6882 / CCUG 24695 / JCM 21032 / LMG 3331 / NBRC 15819 / NCTC 12168 / Alc 37</strain>
    </source>
</reference>
<evidence type="ECO:0000255" key="1">
    <source>
        <dbReference type="HAMAP-Rule" id="MF_00051"/>
    </source>
</evidence>